<evidence type="ECO:0000250" key="1"/>
<evidence type="ECO:0000255" key="2"/>
<evidence type="ECO:0000305" key="3"/>
<organism>
    <name type="scientific">Escherichia coli (strain SMS-3-5 / SECEC)</name>
    <dbReference type="NCBI Taxonomy" id="439855"/>
    <lineage>
        <taxon>Bacteria</taxon>
        <taxon>Pseudomonadati</taxon>
        <taxon>Pseudomonadota</taxon>
        <taxon>Gammaproteobacteria</taxon>
        <taxon>Enterobacterales</taxon>
        <taxon>Enterobacteriaceae</taxon>
        <taxon>Escherichia</taxon>
    </lineage>
</organism>
<name>LSRB_ECOSM</name>
<dbReference type="EMBL" id="CP000970">
    <property type="protein sequence ID" value="ACB19798.1"/>
    <property type="molecule type" value="Genomic_DNA"/>
</dbReference>
<dbReference type="RefSeq" id="WP_000172466.1">
    <property type="nucleotide sequence ID" value="NC_010498.1"/>
</dbReference>
<dbReference type="SMR" id="B1LF99"/>
<dbReference type="KEGG" id="ecm:EcSMS35_1656"/>
<dbReference type="HOGENOM" id="CLU_037628_3_0_6"/>
<dbReference type="Proteomes" id="UP000007011">
    <property type="component" value="Chromosome"/>
</dbReference>
<dbReference type="GO" id="GO:0043190">
    <property type="term" value="C:ATP-binding cassette (ABC) transporter complex"/>
    <property type="evidence" value="ECO:0007669"/>
    <property type="project" value="InterPro"/>
</dbReference>
<dbReference type="GO" id="GO:0030288">
    <property type="term" value="C:outer membrane-bounded periplasmic space"/>
    <property type="evidence" value="ECO:0007669"/>
    <property type="project" value="TreeGrafter"/>
</dbReference>
<dbReference type="GO" id="GO:0030246">
    <property type="term" value="F:carbohydrate binding"/>
    <property type="evidence" value="ECO:0007669"/>
    <property type="project" value="TreeGrafter"/>
</dbReference>
<dbReference type="GO" id="GO:0055085">
    <property type="term" value="P:transmembrane transport"/>
    <property type="evidence" value="ECO:0007669"/>
    <property type="project" value="UniProtKB-ARBA"/>
</dbReference>
<dbReference type="CDD" id="cd20003">
    <property type="entry name" value="PBP1_LsrB_Quorum_Sensing"/>
    <property type="match status" value="1"/>
</dbReference>
<dbReference type="Gene3D" id="3.40.50.2300">
    <property type="match status" value="2"/>
</dbReference>
<dbReference type="InterPro" id="IPR050555">
    <property type="entry name" value="Bact_Solute-Bind_Prot2"/>
</dbReference>
<dbReference type="InterPro" id="IPR030159">
    <property type="entry name" value="LsrB"/>
</dbReference>
<dbReference type="InterPro" id="IPR028082">
    <property type="entry name" value="Peripla_BP_I"/>
</dbReference>
<dbReference type="InterPro" id="IPR025997">
    <property type="entry name" value="SBP_2_dom"/>
</dbReference>
<dbReference type="NCBIfam" id="NF011937">
    <property type="entry name" value="PRK15408.1"/>
    <property type="match status" value="1"/>
</dbReference>
<dbReference type="PANTHER" id="PTHR30036:SF7">
    <property type="entry name" value="ABC TRANSPORTER PERIPLASMIC-BINDING PROTEIN YPHF"/>
    <property type="match status" value="1"/>
</dbReference>
<dbReference type="PANTHER" id="PTHR30036">
    <property type="entry name" value="D-XYLOSE-BINDING PERIPLASMIC PROTEIN"/>
    <property type="match status" value="1"/>
</dbReference>
<dbReference type="Pfam" id="PF13407">
    <property type="entry name" value="Peripla_BP_4"/>
    <property type="match status" value="1"/>
</dbReference>
<dbReference type="SUPFAM" id="SSF53822">
    <property type="entry name" value="Periplasmic binding protein-like I"/>
    <property type="match status" value="1"/>
</dbReference>
<keyword id="KW-0574">Periplasm</keyword>
<keyword id="KW-0732">Signal</keyword>
<reference key="1">
    <citation type="journal article" date="2008" name="J. Bacteriol.">
        <title>Insights into the environmental resistance gene pool from the genome sequence of the multidrug-resistant environmental isolate Escherichia coli SMS-3-5.</title>
        <authorList>
            <person name="Fricke W.F."/>
            <person name="Wright M.S."/>
            <person name="Lindell A.H."/>
            <person name="Harkins D.M."/>
            <person name="Baker-Austin C."/>
            <person name="Ravel J."/>
            <person name="Stepanauskas R."/>
        </authorList>
    </citation>
    <scope>NUCLEOTIDE SEQUENCE [LARGE SCALE GENOMIC DNA]</scope>
    <source>
        <strain>SMS-3-5 / SECEC</strain>
    </source>
</reference>
<proteinExistence type="inferred from homology"/>
<gene>
    <name type="primary">lsrB</name>
    <name type="ordered locus">EcSMS35_1656</name>
</gene>
<feature type="signal peptide" evidence="2">
    <location>
        <begin position="1"/>
        <end position="26"/>
    </location>
</feature>
<feature type="chain" id="PRO_0000351318" description="Autoinducer 2-binding protein LsrB">
    <location>
        <begin position="27"/>
        <end position="340"/>
    </location>
</feature>
<protein>
    <recommendedName>
        <fullName>Autoinducer 2-binding protein LsrB</fullName>
        <shortName>AI-2-binding protein LsrB</shortName>
    </recommendedName>
</protein>
<accession>B1LF99</accession>
<sequence>MTLHRFKKIALLSALGIAAISMNVQAAERIAFIPKLVGVGFFTSGGNGAQQAGKELGVDVTYDGPTEPSVSGQVQLINNFVNQGYNAIIVSAVSPDGLCPALKRAMQRGVRVLTWDSDTKPECRSYYINQGTPAQLGGMLVDMAARQVNKDKAKVAFFYSSPTVTDQNQWVKEAKAKIAKEHPGWEIVTTQFGYNDATKSLQTAEGILKAYSDLDAIIAPDANALPAAAQAAENLKNDKVAIVGFSTPNVMRPYVERGTVKEFGLWDVVQQGKISVYVADALLKKGSMKTGDKLDIQGVGQVEVSPNSVQGYDYEADGNGIVLLPERVIFNKENIGKYDF</sequence>
<comment type="function">
    <text evidence="1">Part of the ABC transporter complex LsrABCD involved in autoinducer 2 (AI-2) import. Binds AI-2 and delivers it to the LsrC and LsrD permeases (By similarity).</text>
</comment>
<comment type="subunit">
    <text evidence="1">The complex is composed of two ATP-binding proteins (LsrA), two transmembrane proteins (LsrC and LsrD) and a solute-binding protein (LsrB).</text>
</comment>
<comment type="subcellular location">
    <subcellularLocation>
        <location evidence="3">Periplasm</location>
    </subcellularLocation>
</comment>
<comment type="similarity">
    <text evidence="3">Belongs to the bacterial solute-binding protein 2 family.</text>
</comment>